<protein>
    <recommendedName>
        <fullName evidence="1">Aspartyl/glutamyl-tRNA(Asn/Gln) amidotransferase subunit C</fullName>
        <shortName evidence="1">Asp/Glu-ADT subunit C</shortName>
        <ecNumber evidence="1">6.3.5.-</ecNumber>
    </recommendedName>
</protein>
<reference key="1">
    <citation type="journal article" date="2005" name="J. Bacteriol.">
        <title>Whole-genome sequence analysis of Pseudomonas syringae pv. phaseolicola 1448A reveals divergence among pathovars in genes involved in virulence and transposition.</title>
        <authorList>
            <person name="Joardar V."/>
            <person name="Lindeberg M."/>
            <person name="Jackson R.W."/>
            <person name="Selengut J."/>
            <person name="Dodson R."/>
            <person name="Brinkac L.M."/>
            <person name="Daugherty S.C."/>
            <person name="DeBoy R.T."/>
            <person name="Durkin A.S."/>
            <person name="Gwinn Giglio M."/>
            <person name="Madupu R."/>
            <person name="Nelson W.C."/>
            <person name="Rosovitz M.J."/>
            <person name="Sullivan S.A."/>
            <person name="Crabtree J."/>
            <person name="Creasy T."/>
            <person name="Davidsen T.M."/>
            <person name="Haft D.H."/>
            <person name="Zafar N."/>
            <person name="Zhou L."/>
            <person name="Halpin R."/>
            <person name="Holley T."/>
            <person name="Khouri H.M."/>
            <person name="Feldblyum T.V."/>
            <person name="White O."/>
            <person name="Fraser C.M."/>
            <person name="Chatterjee A.K."/>
            <person name="Cartinhour S."/>
            <person name="Schneider D."/>
            <person name="Mansfield J.W."/>
            <person name="Collmer A."/>
            <person name="Buell R."/>
        </authorList>
    </citation>
    <scope>NUCLEOTIDE SEQUENCE [LARGE SCALE GENOMIC DNA]</scope>
    <source>
        <strain>1448A / Race 6</strain>
    </source>
</reference>
<comment type="function">
    <text evidence="1">Allows the formation of correctly charged Asn-tRNA(Asn) or Gln-tRNA(Gln) through the transamidation of misacylated Asp-tRNA(Asn) or Glu-tRNA(Gln) in organisms which lack either or both of asparaginyl-tRNA or glutaminyl-tRNA synthetases. The reaction takes place in the presence of glutamine and ATP through an activated phospho-Asp-tRNA(Asn) or phospho-Glu-tRNA(Gln).</text>
</comment>
<comment type="catalytic activity">
    <reaction evidence="1">
        <text>L-glutamyl-tRNA(Gln) + L-glutamine + ATP + H2O = L-glutaminyl-tRNA(Gln) + L-glutamate + ADP + phosphate + H(+)</text>
        <dbReference type="Rhea" id="RHEA:17521"/>
        <dbReference type="Rhea" id="RHEA-COMP:9681"/>
        <dbReference type="Rhea" id="RHEA-COMP:9684"/>
        <dbReference type="ChEBI" id="CHEBI:15377"/>
        <dbReference type="ChEBI" id="CHEBI:15378"/>
        <dbReference type="ChEBI" id="CHEBI:29985"/>
        <dbReference type="ChEBI" id="CHEBI:30616"/>
        <dbReference type="ChEBI" id="CHEBI:43474"/>
        <dbReference type="ChEBI" id="CHEBI:58359"/>
        <dbReference type="ChEBI" id="CHEBI:78520"/>
        <dbReference type="ChEBI" id="CHEBI:78521"/>
        <dbReference type="ChEBI" id="CHEBI:456216"/>
    </reaction>
</comment>
<comment type="catalytic activity">
    <reaction evidence="1">
        <text>L-aspartyl-tRNA(Asn) + L-glutamine + ATP + H2O = L-asparaginyl-tRNA(Asn) + L-glutamate + ADP + phosphate + 2 H(+)</text>
        <dbReference type="Rhea" id="RHEA:14513"/>
        <dbReference type="Rhea" id="RHEA-COMP:9674"/>
        <dbReference type="Rhea" id="RHEA-COMP:9677"/>
        <dbReference type="ChEBI" id="CHEBI:15377"/>
        <dbReference type="ChEBI" id="CHEBI:15378"/>
        <dbReference type="ChEBI" id="CHEBI:29985"/>
        <dbReference type="ChEBI" id="CHEBI:30616"/>
        <dbReference type="ChEBI" id="CHEBI:43474"/>
        <dbReference type="ChEBI" id="CHEBI:58359"/>
        <dbReference type="ChEBI" id="CHEBI:78515"/>
        <dbReference type="ChEBI" id="CHEBI:78516"/>
        <dbReference type="ChEBI" id="CHEBI:456216"/>
    </reaction>
</comment>
<comment type="subunit">
    <text evidence="1">Heterotrimer of A, B and C subunits.</text>
</comment>
<comment type="similarity">
    <text evidence="1">Belongs to the GatC family.</text>
</comment>
<gene>
    <name evidence="1" type="primary">gatC</name>
    <name type="ordered locus">PSPPH_4173</name>
</gene>
<evidence type="ECO:0000255" key="1">
    <source>
        <dbReference type="HAMAP-Rule" id="MF_00122"/>
    </source>
</evidence>
<name>GATC_PSE14</name>
<dbReference type="EC" id="6.3.5.-" evidence="1"/>
<dbReference type="EMBL" id="CP000058">
    <property type="protein sequence ID" value="AAZ37695.1"/>
    <property type="molecule type" value="Genomic_DNA"/>
</dbReference>
<dbReference type="RefSeq" id="WP_002555109.1">
    <property type="nucleotide sequence ID" value="NC_005773.3"/>
</dbReference>
<dbReference type="SMR" id="Q48E93"/>
<dbReference type="GeneID" id="96220644"/>
<dbReference type="KEGG" id="psp:PSPPH_4173"/>
<dbReference type="eggNOG" id="COG0721">
    <property type="taxonomic scope" value="Bacteria"/>
</dbReference>
<dbReference type="HOGENOM" id="CLU_105899_2_2_6"/>
<dbReference type="Proteomes" id="UP000000551">
    <property type="component" value="Chromosome"/>
</dbReference>
<dbReference type="GO" id="GO:0050566">
    <property type="term" value="F:asparaginyl-tRNA synthase (glutamine-hydrolyzing) activity"/>
    <property type="evidence" value="ECO:0007669"/>
    <property type="project" value="RHEA"/>
</dbReference>
<dbReference type="GO" id="GO:0005524">
    <property type="term" value="F:ATP binding"/>
    <property type="evidence" value="ECO:0007669"/>
    <property type="project" value="UniProtKB-KW"/>
</dbReference>
<dbReference type="GO" id="GO:0050567">
    <property type="term" value="F:glutaminyl-tRNA synthase (glutamine-hydrolyzing) activity"/>
    <property type="evidence" value="ECO:0007669"/>
    <property type="project" value="UniProtKB-UniRule"/>
</dbReference>
<dbReference type="GO" id="GO:0070681">
    <property type="term" value="P:glutaminyl-tRNAGln biosynthesis via transamidation"/>
    <property type="evidence" value="ECO:0007669"/>
    <property type="project" value="TreeGrafter"/>
</dbReference>
<dbReference type="GO" id="GO:0006450">
    <property type="term" value="P:regulation of translational fidelity"/>
    <property type="evidence" value="ECO:0007669"/>
    <property type="project" value="InterPro"/>
</dbReference>
<dbReference type="GO" id="GO:0006412">
    <property type="term" value="P:translation"/>
    <property type="evidence" value="ECO:0007669"/>
    <property type="project" value="UniProtKB-UniRule"/>
</dbReference>
<dbReference type="Gene3D" id="1.10.20.60">
    <property type="entry name" value="Glu-tRNAGln amidotransferase C subunit, N-terminal domain"/>
    <property type="match status" value="1"/>
</dbReference>
<dbReference type="HAMAP" id="MF_00122">
    <property type="entry name" value="GatC"/>
    <property type="match status" value="1"/>
</dbReference>
<dbReference type="InterPro" id="IPR036113">
    <property type="entry name" value="Asp/Glu-ADT_sf_sub_c"/>
</dbReference>
<dbReference type="InterPro" id="IPR003837">
    <property type="entry name" value="GatC"/>
</dbReference>
<dbReference type="NCBIfam" id="TIGR00135">
    <property type="entry name" value="gatC"/>
    <property type="match status" value="1"/>
</dbReference>
<dbReference type="PANTHER" id="PTHR15004">
    <property type="entry name" value="GLUTAMYL-TRNA(GLN) AMIDOTRANSFERASE SUBUNIT C, MITOCHONDRIAL"/>
    <property type="match status" value="1"/>
</dbReference>
<dbReference type="PANTHER" id="PTHR15004:SF0">
    <property type="entry name" value="GLUTAMYL-TRNA(GLN) AMIDOTRANSFERASE SUBUNIT C, MITOCHONDRIAL"/>
    <property type="match status" value="1"/>
</dbReference>
<dbReference type="Pfam" id="PF02686">
    <property type="entry name" value="GatC"/>
    <property type="match status" value="1"/>
</dbReference>
<dbReference type="SUPFAM" id="SSF141000">
    <property type="entry name" value="Glu-tRNAGln amidotransferase C subunit"/>
    <property type="match status" value="1"/>
</dbReference>
<feature type="chain" id="PRO_1000016177" description="Aspartyl/glutamyl-tRNA(Asn/Gln) amidotransferase subunit C">
    <location>
        <begin position="1"/>
        <end position="95"/>
    </location>
</feature>
<keyword id="KW-0067">ATP-binding</keyword>
<keyword id="KW-0436">Ligase</keyword>
<keyword id="KW-0547">Nucleotide-binding</keyword>
<keyword id="KW-0648">Protein biosynthesis</keyword>
<accession>Q48E93</accession>
<organism>
    <name type="scientific">Pseudomonas savastanoi pv. phaseolicola (strain 1448A / Race 6)</name>
    <name type="common">Pseudomonas syringae pv. phaseolicola (strain 1448A / Race 6)</name>
    <dbReference type="NCBI Taxonomy" id="264730"/>
    <lineage>
        <taxon>Bacteria</taxon>
        <taxon>Pseudomonadati</taxon>
        <taxon>Pseudomonadota</taxon>
        <taxon>Gammaproteobacteria</taxon>
        <taxon>Pseudomonadales</taxon>
        <taxon>Pseudomonadaceae</taxon>
        <taxon>Pseudomonas</taxon>
    </lineage>
</organism>
<proteinExistence type="inferred from homology"/>
<sequence length="95" mass="10503">MALERSDVEKIAHLARLGLNDADIPRTTEALNSILGLVDQMQAVDTTGIEPLAHPLEATQRLREDAVTERNRRDTYQAIAPAVQDGLYLVPKVIE</sequence>